<evidence type="ECO:0000255" key="1">
    <source>
        <dbReference type="HAMAP-Rule" id="MF_01047"/>
    </source>
</evidence>
<accession>Q0TIW6</accession>
<organism>
    <name type="scientific">Escherichia coli O6:K15:H31 (strain 536 / UPEC)</name>
    <dbReference type="NCBI Taxonomy" id="362663"/>
    <lineage>
        <taxon>Bacteria</taxon>
        <taxon>Pseudomonadati</taxon>
        <taxon>Pseudomonadota</taxon>
        <taxon>Gammaproteobacteria</taxon>
        <taxon>Enterobacterales</taxon>
        <taxon>Enterobacteriaceae</taxon>
        <taxon>Escherichia</taxon>
    </lineage>
</organism>
<feature type="chain" id="PRO_1000064289" description="UPF0227 protein YcfP">
    <location>
        <begin position="1"/>
        <end position="180"/>
    </location>
</feature>
<proteinExistence type="inferred from homology"/>
<gene>
    <name evidence="1" type="primary">ycfP</name>
    <name type="ordered locus">ECP_1100</name>
</gene>
<name>YCFP_ECOL5</name>
<protein>
    <recommendedName>
        <fullName evidence="1">UPF0227 protein YcfP</fullName>
    </recommendedName>
</protein>
<comment type="similarity">
    <text evidence="1">Belongs to the UPF0227 family.</text>
</comment>
<reference key="1">
    <citation type="journal article" date="2006" name="Mol. Microbiol.">
        <title>Role of pathogenicity island-associated integrases in the genome plasticity of uropathogenic Escherichia coli strain 536.</title>
        <authorList>
            <person name="Hochhut B."/>
            <person name="Wilde C."/>
            <person name="Balling G."/>
            <person name="Middendorf B."/>
            <person name="Dobrindt U."/>
            <person name="Brzuszkiewicz E."/>
            <person name="Gottschalk G."/>
            <person name="Carniel E."/>
            <person name="Hacker J."/>
        </authorList>
    </citation>
    <scope>NUCLEOTIDE SEQUENCE [LARGE SCALE GENOMIC DNA]</scope>
    <source>
        <strain>536 / UPEC</strain>
    </source>
</reference>
<sequence>MIIYLHGFDSNSPGNHEKVLQLQFIDPDVRLISYSTRHPKHDMQHLLKEVDKMLQLNVDERPLICGVGLGGYWAERIGFLCDIRQVIFNPNLFPYENMEGKIDRPEEYADIATKCVTNFREKNRDRCLVILSRNDEALNSQRTSEELHHYYEIVWDEEQTHKFKNISPHLQRIKAFKTLG</sequence>
<dbReference type="EMBL" id="CP000247">
    <property type="protein sequence ID" value="ABG69113.1"/>
    <property type="molecule type" value="Genomic_DNA"/>
</dbReference>
<dbReference type="RefSeq" id="WP_000587933.1">
    <property type="nucleotide sequence ID" value="NC_008253.1"/>
</dbReference>
<dbReference type="SMR" id="Q0TIW6"/>
<dbReference type="ESTHER" id="ecoli-ycfp">
    <property type="family name" value="abh_upf00227"/>
</dbReference>
<dbReference type="GeneID" id="93776300"/>
<dbReference type="KEGG" id="ecp:ECP_1100"/>
<dbReference type="HOGENOM" id="CLU_128769_0_0_6"/>
<dbReference type="Proteomes" id="UP000009182">
    <property type="component" value="Chromosome"/>
</dbReference>
<dbReference type="FunFam" id="3.40.50.1820:FF:000007">
    <property type="entry name" value="UPF0227 protein YcfP"/>
    <property type="match status" value="1"/>
</dbReference>
<dbReference type="Gene3D" id="3.40.50.1820">
    <property type="entry name" value="alpha/beta hydrolase"/>
    <property type="match status" value="1"/>
</dbReference>
<dbReference type="HAMAP" id="MF_01047">
    <property type="entry name" value="UPF0227"/>
    <property type="match status" value="1"/>
</dbReference>
<dbReference type="InterPro" id="IPR029058">
    <property type="entry name" value="AB_hydrolase_fold"/>
</dbReference>
<dbReference type="InterPro" id="IPR022987">
    <property type="entry name" value="UPF0227"/>
</dbReference>
<dbReference type="InterPro" id="IPR008886">
    <property type="entry name" value="UPF0227/Esterase_YqiA"/>
</dbReference>
<dbReference type="NCBIfam" id="NF003431">
    <property type="entry name" value="PRK04940.1"/>
    <property type="match status" value="1"/>
</dbReference>
<dbReference type="PANTHER" id="PTHR35602">
    <property type="entry name" value="ESTERASE YQIA-RELATED"/>
    <property type="match status" value="1"/>
</dbReference>
<dbReference type="PANTHER" id="PTHR35602:SF2">
    <property type="entry name" value="UPF0227 PROTEIN YCFP"/>
    <property type="match status" value="1"/>
</dbReference>
<dbReference type="Pfam" id="PF05728">
    <property type="entry name" value="UPF0227"/>
    <property type="match status" value="1"/>
</dbReference>
<dbReference type="SUPFAM" id="SSF53474">
    <property type="entry name" value="alpha/beta-Hydrolases"/>
    <property type="match status" value="1"/>
</dbReference>